<gene>
    <name evidence="14 15 17" type="primary">Fcer1g</name>
    <name type="synonym">Fce1g</name>
</gene>
<reference key="1">
    <citation type="journal article" date="1989" name="J. Biol. Chem.">
        <title>Complete structure of the mouse mast cell receptor for IgE (Fc epsilon RI) and surface expression of chimeric receptors (rat-mouse-human) on transfected cells.</title>
        <authorList>
            <person name="Ra C."/>
            <person name="Jouvin M.H.E."/>
            <person name="Kinet J.-P."/>
        </authorList>
    </citation>
    <scope>NUCLEOTIDE SEQUENCE [MRNA]</scope>
</reference>
<reference key="2">
    <citation type="journal article" date="2004" name="Genome Res.">
        <title>The status, quality, and expansion of the NIH full-length cDNA project: the Mammalian Gene Collection (MGC).</title>
        <authorList>
            <consortium name="The MGC Project Team"/>
        </authorList>
    </citation>
    <scope>NUCLEOTIDE SEQUENCE [LARGE SCALE MRNA]</scope>
    <source>
        <strain>Czech II</strain>
        <tissue>Mammary gland</tissue>
    </source>
</reference>
<reference key="3">
    <citation type="journal article" date="1997" name="EMBO J.">
        <title>The Fc receptor gamma-chain and the tyrosine kinase Syk are essential for activation of mouse platelets by collagen.</title>
        <authorList>
            <person name="Poole A."/>
            <person name="Gibbins J.M."/>
            <person name="Turner M."/>
            <person name="van Vugt M.J."/>
            <person name="van de Winkel J.G."/>
            <person name="Saito T."/>
            <person name="Tybulewicz V.L."/>
            <person name="Watson S.P."/>
        </authorList>
    </citation>
    <scope>FUNCTION IN ACTIVATION OF PLATELETS BY COLLAGEN</scope>
    <scope>FUNCTION IN PLCG2 PHOSPHORYLATION</scope>
</reference>
<reference key="4">
    <citation type="journal article" date="2004" name="J. Immunol.">
        <title>Fc epsilon RI gamma-ITAM is differentially required for mast cell function in vivo.</title>
        <authorList>
            <person name="Sakurai D."/>
            <person name="Yamasaki S."/>
            <person name="Arase K."/>
            <person name="Park S.Y."/>
            <person name="Arase H."/>
            <person name="Konno A."/>
            <person name="Saito T."/>
        </authorList>
    </citation>
    <scope>FUNCTION</scope>
    <scope>TISSUE SPECIFICITY</scope>
    <scope>DISRUPTION PHENOTYPE</scope>
    <scope>MUTAGENESIS OF TYR-65; TYR-76 AND 65-TYR--GLN-86</scope>
</reference>
<reference key="5">
    <citation type="journal article" date="2006" name="J. Biol. Chem.">
        <title>Dectin-2 is a pattern recognition receptor for fungi that couples with the Fc receptor gamma chain to induce innate immune responses.</title>
        <authorList>
            <person name="Sato K."/>
            <person name="Yang X.L."/>
            <person name="Yudate T."/>
            <person name="Chung J.S."/>
            <person name="Wu J."/>
            <person name="Luby-Phelps K."/>
            <person name="Kimberly R.P."/>
            <person name="Underhill D."/>
            <person name="Cruz P.D. Jr."/>
            <person name="Ariizumi K."/>
        </authorList>
    </citation>
    <scope>INTERACTION WITH CLEC6A</scope>
</reference>
<reference key="6">
    <citation type="journal article" date="2006" name="Nat. Immunol.">
        <title>Integrin signaling in neutrophils and macrophages uses adapters containing immunoreceptor tyrosine-based activation motifs.</title>
        <authorList>
            <person name="Mocsai A."/>
            <person name="Abram C.L."/>
            <person name="Jakus Z."/>
            <person name="Hu Y."/>
            <person name="Lanier L.L."/>
            <person name="Lowell C.A."/>
        </authorList>
    </citation>
    <scope>FUNCTION IN INTEGRIN-MEDIATED NEUTROPHIL ACTIVATION</scope>
    <scope>INTERACTION WITH SYK</scope>
</reference>
<reference key="7">
    <citation type="journal article" date="2007" name="J. Immunol.">
        <title>Quantitative time-resolved phosphoproteomic analysis of mast cell signaling.</title>
        <authorList>
            <person name="Cao L."/>
            <person name="Yu K."/>
            <person name="Banh C."/>
            <person name="Nguyen V."/>
            <person name="Ritz A."/>
            <person name="Raphael B.J."/>
            <person name="Kawakami Y."/>
            <person name="Kawakami T."/>
            <person name="Salomon A.R."/>
        </authorList>
    </citation>
    <scope>PHOSPHORYLATION [LARGE SCALE ANALYSIS] AT TYR-65; TYR-76 AND THR-78</scope>
    <scope>IDENTIFICATION BY MASS SPECTROMETRY [LARGE SCALE ANALYSIS]</scope>
    <source>
        <tissue>Mast cell</tissue>
    </source>
</reference>
<reference key="8">
    <citation type="journal article" date="2008" name="Nat. Immunol.">
        <title>Mincle is an ITAM-coupled activating receptor that senses damaged cells.</title>
        <authorList>
            <person name="Yamasaki S."/>
            <person name="Ishikawa E."/>
            <person name="Sakuma M."/>
            <person name="Hara H."/>
            <person name="Ogata K."/>
            <person name="Saito T."/>
        </authorList>
    </citation>
    <scope>INTERACTION WITH CLEC4E</scope>
</reference>
<reference key="9">
    <citation type="journal article" date="2009" name="Immunity">
        <title>The phagosomal proteome in interferon-gamma-activated macrophages.</title>
        <authorList>
            <person name="Trost M."/>
            <person name="English L."/>
            <person name="Lemieux S."/>
            <person name="Courcelles M."/>
            <person name="Desjardins M."/>
            <person name="Thibault P."/>
        </authorList>
    </citation>
    <scope>PHOSPHORYLATION [LARGE SCALE ANALYSIS] AT TYR-65 AND TYR-76</scope>
    <scope>IDENTIFICATION BY MASS SPECTROMETRY [LARGE SCALE ANALYSIS]</scope>
</reference>
<reference key="10">
    <citation type="journal article" date="2009" name="Nat. Immunol.">
        <title>Fc receptor gamma-chain, a constitutive component of the IL-3 receptor, is required for IL-3-induced IL-4 production in basophils.</title>
        <authorList>
            <person name="Hida S."/>
            <person name="Yamasaki S."/>
            <person name="Sakamoto Y."/>
            <person name="Takamoto M."/>
            <person name="Obata K."/>
            <person name="Takai T."/>
            <person name="Karasuyama H."/>
            <person name="Sugane K."/>
            <person name="Saito T."/>
            <person name="Taki S."/>
        </authorList>
    </citation>
    <scope>FUNCTION</scope>
    <scope>SUBUNIT</scope>
    <scope>MUTAGENESIS OF ASP-29; LEU-39; TYR-65 AND TYR-76</scope>
    <scope>TISSUE SPECIFICITY</scope>
</reference>
<reference key="11">
    <citation type="journal article" date="2010" name="J. Biol. Chem.">
        <title>Characterization of leukocyte mono-immunoglobulin-like receptor 7 (LMIR7)/CLM-3 as an activating receptor: its similarities to and differences from LMIR4/CLM-5.</title>
        <authorList>
            <person name="Enomoto Y."/>
            <person name="Yamanishi Y."/>
            <person name="Izawa K."/>
            <person name="Kaitani A."/>
            <person name="Takahashi M."/>
            <person name="Maehara A."/>
            <person name="Oki T."/>
            <person name="Takamatsu R."/>
            <person name="Kajikawa M."/>
            <person name="Takai T."/>
            <person name="Kitamura T."/>
            <person name="Kitaura J."/>
        </authorList>
    </citation>
    <scope>INTERACTION WITH CD300LH AND CD300LD</scope>
</reference>
<reference key="12">
    <citation type="journal article" date="2013" name="Immunity">
        <title>C-type lectin MCL is an FcRgamma-coupled receptor that mediates the adjuvanticity of mycobacterial cord factor.</title>
        <authorList>
            <person name="Miyake Y."/>
            <person name="Toyonaga K."/>
            <person name="Mori D."/>
            <person name="Kakuta S."/>
            <person name="Hoshino Y."/>
            <person name="Oyamada A."/>
            <person name="Yamada H."/>
            <person name="Ono K."/>
            <person name="Suyama M."/>
            <person name="Iwakura Y."/>
            <person name="Yoshikai Y."/>
            <person name="Yamasaki S."/>
        </authorList>
    </citation>
    <scope>FUNCTION</scope>
    <scope>SUBUNIT</scope>
</reference>
<accession>P20491</accession>
<dbReference type="EMBL" id="J05020">
    <property type="protein sequence ID" value="AAA37602.1"/>
    <property type="molecule type" value="mRNA"/>
</dbReference>
<dbReference type="EMBL" id="BC034163">
    <property type="protein sequence ID" value="AAH34163.1"/>
    <property type="molecule type" value="mRNA"/>
</dbReference>
<dbReference type="CCDS" id="CCDS15483.1"/>
<dbReference type="RefSeq" id="NP_034315.1">
    <property type="nucleotide sequence ID" value="NM_010185.4"/>
</dbReference>
<dbReference type="PDB" id="8K7T">
    <property type="method" value="EM"/>
    <property type="resolution" value="3.71 A"/>
    <property type="chains" value="G/H=1-86"/>
</dbReference>
<dbReference type="PDB" id="8YRJ">
    <property type="method" value="EM"/>
    <property type="resolution" value="3.87 A"/>
    <property type="chains" value="G/H=1-86"/>
</dbReference>
<dbReference type="PDBsum" id="8K7T"/>
<dbReference type="PDBsum" id="8YRJ"/>
<dbReference type="EMDB" id="EMD-36941"/>
<dbReference type="EMDB" id="EMD-39543"/>
<dbReference type="SMR" id="P20491"/>
<dbReference type="BioGRID" id="199616">
    <property type="interactions" value="4"/>
</dbReference>
<dbReference type="FunCoup" id="P20491">
    <property type="interactions" value="547"/>
</dbReference>
<dbReference type="IntAct" id="P20491">
    <property type="interactions" value="1"/>
</dbReference>
<dbReference type="STRING" id="10090.ENSMUSP00000078875"/>
<dbReference type="iPTMnet" id="P20491"/>
<dbReference type="PhosphoSitePlus" id="P20491"/>
<dbReference type="SwissPalm" id="P20491"/>
<dbReference type="jPOST" id="P20491"/>
<dbReference type="PaxDb" id="10090-ENSMUSP00000078875"/>
<dbReference type="PeptideAtlas" id="P20491"/>
<dbReference type="ProteomicsDB" id="267364"/>
<dbReference type="Antibodypedia" id="20505">
    <property type="antibodies" value="180 antibodies from 29 providers"/>
</dbReference>
<dbReference type="DNASU" id="14127"/>
<dbReference type="Ensembl" id="ENSMUST00000079957.12">
    <property type="protein sequence ID" value="ENSMUSP00000078875.7"/>
    <property type="gene ID" value="ENSMUSG00000058715.12"/>
</dbReference>
<dbReference type="GeneID" id="14127"/>
<dbReference type="KEGG" id="mmu:14127"/>
<dbReference type="UCSC" id="uc007dnl.1">
    <property type="organism name" value="mouse"/>
</dbReference>
<dbReference type="AGR" id="MGI:95496"/>
<dbReference type="CTD" id="2207"/>
<dbReference type="MGI" id="MGI:95496">
    <property type="gene designation" value="Fcer1g"/>
</dbReference>
<dbReference type="VEuPathDB" id="HostDB:ENSMUSG00000058715"/>
<dbReference type="eggNOG" id="ENOG502S7XC">
    <property type="taxonomic scope" value="Eukaryota"/>
</dbReference>
<dbReference type="GeneTree" id="ENSGT00390000003894"/>
<dbReference type="HOGENOM" id="CLU_192374_0_0_1"/>
<dbReference type="InParanoid" id="P20491"/>
<dbReference type="OMA" id="CRLKIQM"/>
<dbReference type="OrthoDB" id="74711at9989"/>
<dbReference type="PhylomeDB" id="P20491"/>
<dbReference type="TreeFam" id="TF330937"/>
<dbReference type="Reactome" id="R-MMU-114604">
    <property type="pathway name" value="GPVI-mediated activation cascade"/>
</dbReference>
<dbReference type="Reactome" id="R-MMU-202733">
    <property type="pathway name" value="Cell surface interactions at the vascular wall"/>
</dbReference>
<dbReference type="Reactome" id="R-MMU-2454202">
    <property type="pathway name" value="Fc epsilon receptor (FCERI) signaling"/>
</dbReference>
<dbReference type="Reactome" id="R-MMU-2730905">
    <property type="pathway name" value="Role of LAT2/NTAL/LAB on calcium mobilization"/>
</dbReference>
<dbReference type="Reactome" id="R-MMU-2871796">
    <property type="pathway name" value="FCERI mediated MAPK activation"/>
</dbReference>
<dbReference type="Reactome" id="R-MMU-2871809">
    <property type="pathway name" value="FCERI mediated Ca+2 mobilization"/>
</dbReference>
<dbReference type="Reactome" id="R-MMU-2871837">
    <property type="pathway name" value="FCERI mediated NF-kB activation"/>
</dbReference>
<dbReference type="Reactome" id="R-MMU-5621480">
    <property type="pathway name" value="Dectin-2 family"/>
</dbReference>
<dbReference type="Reactome" id="R-MMU-6798695">
    <property type="pathway name" value="Neutrophil degranulation"/>
</dbReference>
<dbReference type="Reactome" id="R-MMU-75892">
    <property type="pathway name" value="Platelet Adhesion to exposed collagen"/>
</dbReference>
<dbReference type="BioGRID-ORCS" id="14127">
    <property type="hits" value="3 hits in 78 CRISPR screens"/>
</dbReference>
<dbReference type="ChiTaRS" id="Fcer1g">
    <property type="organism name" value="mouse"/>
</dbReference>
<dbReference type="PRO" id="PR:P20491"/>
<dbReference type="Proteomes" id="UP000000589">
    <property type="component" value="Chromosome 1"/>
</dbReference>
<dbReference type="RNAct" id="P20491">
    <property type="molecule type" value="protein"/>
</dbReference>
<dbReference type="Bgee" id="ENSMUSG00000058715">
    <property type="expression patterns" value="Expressed in granulocyte and 149 other cell types or tissues"/>
</dbReference>
<dbReference type="ExpressionAtlas" id="P20491">
    <property type="expression patterns" value="baseline and differential"/>
</dbReference>
<dbReference type="GO" id="GO:0009986">
    <property type="term" value="C:cell surface"/>
    <property type="evidence" value="ECO:0000314"/>
    <property type="project" value="MGI"/>
</dbReference>
<dbReference type="GO" id="GO:0009897">
    <property type="term" value="C:external side of plasma membrane"/>
    <property type="evidence" value="ECO:0000314"/>
    <property type="project" value="MGI"/>
</dbReference>
<dbReference type="GO" id="GO:0032998">
    <property type="term" value="C:Fc-epsilon receptor I complex"/>
    <property type="evidence" value="ECO:0000315"/>
    <property type="project" value="MGI"/>
</dbReference>
<dbReference type="GO" id="GO:0033001">
    <property type="term" value="C:Fc-gamma receptor III complex"/>
    <property type="evidence" value="ECO:0007669"/>
    <property type="project" value="Ensembl"/>
</dbReference>
<dbReference type="GO" id="GO:0045121">
    <property type="term" value="C:membrane raft"/>
    <property type="evidence" value="ECO:0000304"/>
    <property type="project" value="MGI"/>
</dbReference>
<dbReference type="GO" id="GO:0005886">
    <property type="term" value="C:plasma membrane"/>
    <property type="evidence" value="ECO:0000314"/>
    <property type="project" value="MGI"/>
</dbReference>
<dbReference type="GO" id="GO:0042802">
    <property type="term" value="F:identical protein binding"/>
    <property type="evidence" value="ECO:0000353"/>
    <property type="project" value="MGI"/>
</dbReference>
<dbReference type="GO" id="GO:0019863">
    <property type="term" value="F:IgE binding"/>
    <property type="evidence" value="ECO:0000314"/>
    <property type="project" value="MGI"/>
</dbReference>
<dbReference type="GO" id="GO:0019767">
    <property type="term" value="F:IgE receptor activity"/>
    <property type="evidence" value="ECO:0000314"/>
    <property type="project" value="MGI"/>
</dbReference>
<dbReference type="GO" id="GO:0019864">
    <property type="term" value="F:IgG binding"/>
    <property type="evidence" value="ECO:0000315"/>
    <property type="project" value="MGI"/>
</dbReference>
<dbReference type="GO" id="GO:0046872">
    <property type="term" value="F:metal ion binding"/>
    <property type="evidence" value="ECO:0007669"/>
    <property type="project" value="UniProtKB-KW"/>
</dbReference>
<dbReference type="GO" id="GO:0042803">
    <property type="term" value="F:protein homodimerization activity"/>
    <property type="evidence" value="ECO:0007669"/>
    <property type="project" value="Ensembl"/>
</dbReference>
<dbReference type="GO" id="GO:0042590">
    <property type="term" value="P:antigen processing and presentation of exogenous peptide antigen via MHC class I"/>
    <property type="evidence" value="ECO:0000315"/>
    <property type="project" value="MGI"/>
</dbReference>
<dbReference type="GO" id="GO:0019886">
    <property type="term" value="P:antigen processing and presentation of exogenous peptide antigen via MHC class II"/>
    <property type="evidence" value="ECO:0000315"/>
    <property type="project" value="MGI"/>
</dbReference>
<dbReference type="GO" id="GO:0007166">
    <property type="term" value="P:cell surface receptor signaling pathway"/>
    <property type="evidence" value="ECO:0000315"/>
    <property type="project" value="MGI"/>
</dbReference>
<dbReference type="GO" id="GO:0071404">
    <property type="term" value="P:cellular response to low-density lipoprotein particle stimulus"/>
    <property type="evidence" value="ECO:0000314"/>
    <property type="project" value="UniProtKB"/>
</dbReference>
<dbReference type="GO" id="GO:0042742">
    <property type="term" value="P:defense response to bacterium"/>
    <property type="evidence" value="ECO:0000315"/>
    <property type="project" value="MGI"/>
</dbReference>
<dbReference type="GO" id="GO:0002431">
    <property type="term" value="P:Fc receptor mediated stimulatory signaling pathway"/>
    <property type="evidence" value="ECO:0000315"/>
    <property type="project" value="MGI"/>
</dbReference>
<dbReference type="GO" id="GO:0038094">
    <property type="term" value="P:Fc-gamma receptor signaling pathway"/>
    <property type="evidence" value="ECO:0000314"/>
    <property type="project" value="MGI"/>
</dbReference>
<dbReference type="GO" id="GO:0016064">
    <property type="term" value="P:immunoglobulin mediated immune response"/>
    <property type="evidence" value="ECO:0000315"/>
    <property type="project" value="MGI"/>
</dbReference>
<dbReference type="GO" id="GO:0045087">
    <property type="term" value="P:innate immune response"/>
    <property type="evidence" value="ECO:0000315"/>
    <property type="project" value="MGI"/>
</dbReference>
<dbReference type="GO" id="GO:0007229">
    <property type="term" value="P:integrin-mediated signaling pathway"/>
    <property type="evidence" value="ECO:0000315"/>
    <property type="project" value="UniProtKB"/>
</dbReference>
<dbReference type="GO" id="GO:0038156">
    <property type="term" value="P:interleukin-3-mediated signaling pathway"/>
    <property type="evidence" value="ECO:0000315"/>
    <property type="project" value="UniProtKB"/>
</dbReference>
<dbReference type="GO" id="GO:0045576">
    <property type="term" value="P:mast cell activation"/>
    <property type="evidence" value="ECO:0000314"/>
    <property type="project" value="MGI"/>
</dbReference>
<dbReference type="GO" id="GO:0033024">
    <property type="term" value="P:mast cell apoptotic process"/>
    <property type="evidence" value="ECO:0000314"/>
    <property type="project" value="MGI"/>
</dbReference>
<dbReference type="GO" id="GO:0043303">
    <property type="term" value="P:mast cell degranulation"/>
    <property type="evidence" value="ECO:0000314"/>
    <property type="project" value="MGI"/>
</dbReference>
<dbReference type="GO" id="GO:0033026">
    <property type="term" value="P:negative regulation of mast cell apoptotic process"/>
    <property type="evidence" value="ECO:0000314"/>
    <property type="project" value="MGI"/>
</dbReference>
<dbReference type="GO" id="GO:0002283">
    <property type="term" value="P:neutrophil activation involved in immune response"/>
    <property type="evidence" value="ECO:0000315"/>
    <property type="project" value="UniProtKB"/>
</dbReference>
<dbReference type="GO" id="GO:0030593">
    <property type="term" value="P:neutrophil chemotaxis"/>
    <property type="evidence" value="ECO:0000315"/>
    <property type="project" value="MGI"/>
</dbReference>
<dbReference type="GO" id="GO:0030316">
    <property type="term" value="P:osteoclast differentiation"/>
    <property type="evidence" value="ECO:0000315"/>
    <property type="project" value="MGI"/>
</dbReference>
<dbReference type="GO" id="GO:0006911">
    <property type="term" value="P:phagocytosis, engulfment"/>
    <property type="evidence" value="ECO:0000315"/>
    <property type="project" value="MGI"/>
</dbReference>
<dbReference type="GO" id="GO:0050778">
    <property type="term" value="P:positive regulation of immune response"/>
    <property type="evidence" value="ECO:0000315"/>
    <property type="project" value="MGI"/>
</dbReference>
<dbReference type="GO" id="GO:0032733">
    <property type="term" value="P:positive regulation of interleukin-10 production"/>
    <property type="evidence" value="ECO:0000315"/>
    <property type="project" value="MGI"/>
</dbReference>
<dbReference type="GO" id="GO:0032753">
    <property type="term" value="P:positive regulation of interleukin-4 production"/>
    <property type="evidence" value="ECO:0000315"/>
    <property type="project" value="UniProtKB"/>
</dbReference>
<dbReference type="GO" id="GO:0032755">
    <property type="term" value="P:positive regulation of interleukin-6 production"/>
    <property type="evidence" value="ECO:0000314"/>
    <property type="project" value="MGI"/>
</dbReference>
<dbReference type="GO" id="GO:0032765">
    <property type="term" value="P:positive regulation of mast cell cytokine production"/>
    <property type="evidence" value="ECO:0000314"/>
    <property type="project" value="MGI"/>
</dbReference>
<dbReference type="GO" id="GO:0043306">
    <property type="term" value="P:positive regulation of mast cell degranulation"/>
    <property type="evidence" value="ECO:0000314"/>
    <property type="project" value="MGI"/>
</dbReference>
<dbReference type="GO" id="GO:0050766">
    <property type="term" value="P:positive regulation of phagocytosis"/>
    <property type="evidence" value="ECO:0000315"/>
    <property type="project" value="MGI"/>
</dbReference>
<dbReference type="GO" id="GO:2000010">
    <property type="term" value="P:positive regulation of protein localization to cell surface"/>
    <property type="evidence" value="ECO:0000314"/>
    <property type="project" value="MGI"/>
</dbReference>
<dbReference type="GO" id="GO:0032760">
    <property type="term" value="P:positive regulation of tumor necrosis factor production"/>
    <property type="evidence" value="ECO:0000314"/>
    <property type="project" value="MGI"/>
</dbReference>
<dbReference type="GO" id="GO:0001812">
    <property type="term" value="P:positive regulation of type I hypersensitivity"/>
    <property type="evidence" value="ECO:0000315"/>
    <property type="project" value="MGI"/>
</dbReference>
<dbReference type="GO" id="GO:0001798">
    <property type="term" value="P:positive regulation of type IIa hypersensitivity"/>
    <property type="evidence" value="ECO:0000315"/>
    <property type="project" value="MGI"/>
</dbReference>
<dbReference type="GO" id="GO:0001805">
    <property type="term" value="P:positive regulation of type III hypersensitivity"/>
    <property type="evidence" value="ECO:0000315"/>
    <property type="project" value="MGI"/>
</dbReference>
<dbReference type="GO" id="GO:0072659">
    <property type="term" value="P:protein localization to plasma membrane"/>
    <property type="evidence" value="ECO:0000314"/>
    <property type="project" value="MGI"/>
</dbReference>
<dbReference type="GO" id="GO:0031623">
    <property type="term" value="P:receptor internalization"/>
    <property type="evidence" value="ECO:0000314"/>
    <property type="project" value="UniProtKB"/>
</dbReference>
<dbReference type="GO" id="GO:0050776">
    <property type="term" value="P:regulation of immune response"/>
    <property type="evidence" value="ECO:0000315"/>
    <property type="project" value="MGI"/>
</dbReference>
<dbReference type="GO" id="GO:0010543">
    <property type="term" value="P:regulation of platelet activation"/>
    <property type="evidence" value="ECO:0000315"/>
    <property type="project" value="UniProtKB"/>
</dbReference>
<dbReference type="GO" id="GO:0002554">
    <property type="term" value="P:serotonin secretion by platelet"/>
    <property type="evidence" value="ECO:0000315"/>
    <property type="project" value="UniProtKB"/>
</dbReference>
<dbReference type="GO" id="GO:0007165">
    <property type="term" value="P:signal transduction"/>
    <property type="evidence" value="ECO:0000314"/>
    <property type="project" value="MGI"/>
</dbReference>
<dbReference type="GO" id="GO:0002292">
    <property type="term" value="P:T cell differentiation involved in immune response"/>
    <property type="evidence" value="ECO:0000315"/>
    <property type="project" value="MGI"/>
</dbReference>
<dbReference type="InterPro" id="IPR021663">
    <property type="entry name" value="CD3_zeta/IgE_Fc_rcpt_gamma"/>
</dbReference>
<dbReference type="InterPro" id="IPR042340">
    <property type="entry name" value="FCER1G"/>
</dbReference>
<dbReference type="InterPro" id="IPR003110">
    <property type="entry name" value="Phos_immunorcpt_sig_ITAM"/>
</dbReference>
<dbReference type="PANTHER" id="PTHR16803">
    <property type="entry name" value="HIGH AFFINITY IMMUNOGLOBULIN EPSILON RECEPTOR GAMMA-SUBUNIT"/>
    <property type="match status" value="1"/>
</dbReference>
<dbReference type="PANTHER" id="PTHR16803:SF0">
    <property type="entry name" value="HIGH AFFINITY IMMUNOGLOBULIN EPSILON RECEPTOR SUBUNIT GAMMA"/>
    <property type="match status" value="1"/>
</dbReference>
<dbReference type="Pfam" id="PF02189">
    <property type="entry name" value="ITAM"/>
    <property type="match status" value="1"/>
</dbReference>
<dbReference type="Pfam" id="PF11628">
    <property type="entry name" value="TCR_zetazeta"/>
    <property type="match status" value="1"/>
</dbReference>
<dbReference type="SMART" id="SM00077">
    <property type="entry name" value="ITAM"/>
    <property type="match status" value="1"/>
</dbReference>
<dbReference type="PROSITE" id="PS51055">
    <property type="entry name" value="ITAM_1"/>
    <property type="match status" value="1"/>
</dbReference>
<comment type="function">
    <text evidence="6 8 10 12 13 16">Adapter protein containing an immunoreceptor tyrosine-based activation motif (ITAM) that transduces activation signals from various immunoreceptors. As a component of the high-affinity immunoglobulin E (IgE) receptor, mediates allergic inflammatory signaling in mast cells (PubMed:14764707). As a constitutive component of interleukin-3 receptor complex, selectively mediates interleukin 4/IL4 production by basophils, priming T-cells toward effector T-helper 2 subset (PubMed:19098920). Associates with pattern recognition receptors CLEC4D and CLEC4E to form a functional signaling complex in myeloid cells. Binding of mycobacterial trehalose 6,6'-dimycolate (TDM) to this receptor complex leads to phosphorylation of ITAM, triggering activation of SYK, CARD9 and NF-kappa-B, consequently driving maturation of antigen-presenting cells and shaping antigen-specific priming of T-cells toward effector T-helper 1 and T-helper 17 cell subtypes (Probable) (PubMed:23602766). May function cooperatively with other activating receptors. Functionally linked to integrin beta-2/ITGB2-mediated neutrophil activation (PubMed:17086186). Also involved in integrin alpha-2/ITGA2-mediated platelet activation (PubMed:9171347).</text>
</comment>
<comment type="subunit">
    <text evidence="2 3 7 8 9 10 11 12">IgE Fc receptor is a tetramer of an alpha chain, a beta chain, and two disulfide linked gamma chains. Associates with FCGR1A; forms a functional signaling complex (By similarity). The signaling subunit of immunoglobulin gamma (IgG) Fc receptor complex. As a homodimer or a heterodimer of CD247 and FCER1G, associates with the ligand binding subunit FCGR3A to form a functional receptor complex (By similarity). Associates with CLEC6A (PubMed:17050534). Interacts with CLEC4E (PubMed:18776906, PubMed:23602766). Interacts (via ITAM domain) with SYK (via SH2 domains); activates SYK, enabling integrin-mediated activation of neutrophils and macrophages (PubMed:17086186). Interacts with CSF2RB and recruits SYK in response to IL3 stimulation; this interaction is direct (PubMed:19098920). Interacts with CD300LH; the interaction may be indirect (PubMed:20817736). Interacts with CD300LD (PubMed:20817736). Interacts with TARM1 (By similarity).</text>
</comment>
<comment type="interaction">
    <interactant intactId="EBI-9306159">
        <id>P20491</id>
    </interactant>
    <interactant intactId="EBI-646604">
        <id>Q62120</id>
        <label>Jak2</label>
    </interactant>
    <organismsDiffer>false</organismsDiffer>
    <experiments>2</experiments>
</comment>
<comment type="subcellular location">
    <subcellularLocation>
        <location evidence="1">Cell membrane</location>
        <topology evidence="1">Single-pass type I membrane protein</topology>
    </subcellularLocation>
</comment>
<comment type="tissue specificity">
    <text evidence="6 10">Expressed in mast cells (at protein level) (PubMed:14764707). Expressed in basophils (at protein level) (PubMed:19098920).</text>
</comment>
<comment type="disruption phenotype">
    <text evidence="6">Knockout mice are resistant to IgE-mediated systemic anaphylaxis.</text>
</comment>
<comment type="similarity">
    <text evidence="16">Belongs to the CD3Z/FCER1G family.</text>
</comment>
<protein>
    <recommendedName>
        <fullName>High affinity immunoglobulin epsilon receptor subunit gamma</fullName>
    </recommendedName>
    <alternativeName>
        <fullName>Fc receptor gamma-chain</fullName>
        <shortName>FcRgamma</shortName>
    </alternativeName>
    <alternativeName>
        <fullName>Fc-epsilon RI-gamma</fullName>
    </alternativeName>
    <alternativeName>
        <fullName>IgE Fc receptor subunit gamma</fullName>
        <shortName>FceRI gamma</shortName>
    </alternativeName>
</protein>
<organism>
    <name type="scientific">Mus musculus</name>
    <name type="common">Mouse</name>
    <dbReference type="NCBI Taxonomy" id="10090"/>
    <lineage>
        <taxon>Eukaryota</taxon>
        <taxon>Metazoa</taxon>
        <taxon>Chordata</taxon>
        <taxon>Craniata</taxon>
        <taxon>Vertebrata</taxon>
        <taxon>Euteleostomi</taxon>
        <taxon>Mammalia</taxon>
        <taxon>Eutheria</taxon>
        <taxon>Euarchontoglires</taxon>
        <taxon>Glires</taxon>
        <taxon>Rodentia</taxon>
        <taxon>Myomorpha</taxon>
        <taxon>Muroidea</taxon>
        <taxon>Muridae</taxon>
        <taxon>Murinae</taxon>
        <taxon>Mus</taxon>
        <taxon>Mus</taxon>
    </lineage>
</organism>
<sequence length="86" mass="9652">MISAVILFLLLLVEQAAALGEPQLCYILDAVLFLYGIVLTLLYCRLKIQVRKAAIASREKADAVYTGLNTRSQETYETLKHEKPPQ</sequence>
<feature type="signal peptide" evidence="4">
    <location>
        <begin position="1"/>
        <end position="18"/>
    </location>
</feature>
<feature type="chain" id="PRO_0000016503" description="High affinity immunoglobulin epsilon receptor subunit gamma">
    <location>
        <begin position="19"/>
        <end position="86"/>
    </location>
</feature>
<feature type="topological domain" description="Extracellular" evidence="4">
    <location>
        <begin position="19"/>
        <end position="23"/>
    </location>
</feature>
<feature type="transmembrane region" description="Helical" evidence="4">
    <location>
        <begin position="24"/>
        <end position="44"/>
    </location>
</feature>
<feature type="topological domain" description="Cytoplasmic" evidence="4">
    <location>
        <begin position="45"/>
        <end position="86"/>
    </location>
</feature>
<feature type="domain" description="ITAM" evidence="5">
    <location>
        <begin position="54"/>
        <end position="82"/>
    </location>
</feature>
<feature type="modified residue" description="Phosphotyrosine" evidence="18 19">
    <location>
        <position position="65"/>
    </location>
</feature>
<feature type="modified residue" description="Phosphotyrosine" evidence="18 19">
    <location>
        <position position="76"/>
    </location>
</feature>
<feature type="modified residue" description="Phosphothreonine" evidence="18">
    <location>
        <position position="78"/>
    </location>
</feature>
<feature type="disulfide bond" description="Interchain" evidence="1">
    <location>
        <position position="25"/>
    </location>
</feature>
<feature type="mutagenesis site" description="Increases IL3-induced production of IL4 by basophils." evidence="10">
    <original>D</original>
    <variation>A</variation>
    <location>
        <position position="29"/>
    </location>
</feature>
<feature type="mutagenesis site" description="Impairs interaction with CSF2RB. Impairs IL3-induced production of IL4 by basophils." evidence="10">
    <original>L</original>
    <variation>A</variation>
    <location>
        <position position="39"/>
    </location>
</feature>
<feature type="mutagenesis site" description="Impairs IgE-induced mast cell activation in the presence of antigen; Impairs IgE-induced mast cell survival in the absence of antigen." evidence="6">
    <location>
        <begin position="65"/>
        <end position="86"/>
    </location>
</feature>
<feature type="mutagenesis site" description="Impairs IgE-induced mast cell activation in the presence of antigen; Impairs IgE-induced mast cell survival in the absence of antigen; when associated with P-76. Impairs IL3-induced production of IL4 by basophils; when associated with P-76." evidence="6 10">
    <original>Y</original>
    <variation>P</variation>
    <location>
        <position position="65"/>
    </location>
</feature>
<feature type="mutagenesis site" description="Impairs IgE-induced mast cell activation in the presence of antigen; Impairs IgE-induced mast cell survival in the absence of antigen; when associated with P-65. Impairs IL3-induced production of IL4 by basophils; when associated with P-65." evidence="6 10">
    <original>Y</original>
    <variation>P</variation>
    <location>
        <position position="76"/>
    </location>
</feature>
<name>FCERG_MOUSE</name>
<keyword id="KW-0002">3D-structure</keyword>
<keyword id="KW-1003">Cell membrane</keyword>
<keyword id="KW-1015">Disulfide bond</keyword>
<keyword id="KW-0389">IgE-binding protein</keyword>
<keyword id="KW-0391">Immunity</keyword>
<keyword id="KW-0399">Innate immunity</keyword>
<keyword id="KW-0472">Membrane</keyword>
<keyword id="KW-0479">Metal-binding</keyword>
<keyword id="KW-0597">Phosphoprotein</keyword>
<keyword id="KW-0675">Receptor</keyword>
<keyword id="KW-1185">Reference proteome</keyword>
<keyword id="KW-0732">Signal</keyword>
<keyword id="KW-0812">Transmembrane</keyword>
<keyword id="KW-1133">Transmembrane helix</keyword>
<evidence type="ECO:0000250" key="1"/>
<evidence type="ECO:0000250" key="2">
    <source>
        <dbReference type="UniProtKB" id="P20411"/>
    </source>
</evidence>
<evidence type="ECO:0000250" key="3">
    <source>
        <dbReference type="UniProtKB" id="P30273"/>
    </source>
</evidence>
<evidence type="ECO:0000255" key="4"/>
<evidence type="ECO:0000255" key="5">
    <source>
        <dbReference type="PROSITE-ProRule" id="PRU00379"/>
    </source>
</evidence>
<evidence type="ECO:0000269" key="6">
    <source>
    </source>
</evidence>
<evidence type="ECO:0000269" key="7">
    <source>
    </source>
</evidence>
<evidence type="ECO:0000269" key="8">
    <source>
    </source>
</evidence>
<evidence type="ECO:0000269" key="9">
    <source>
    </source>
</evidence>
<evidence type="ECO:0000269" key="10">
    <source>
    </source>
</evidence>
<evidence type="ECO:0000269" key="11">
    <source>
    </source>
</evidence>
<evidence type="ECO:0000269" key="12">
    <source>
    </source>
</evidence>
<evidence type="ECO:0000269" key="13">
    <source>
    </source>
</evidence>
<evidence type="ECO:0000303" key="14">
    <source>
    </source>
</evidence>
<evidence type="ECO:0000303" key="15">
    <source>
    </source>
</evidence>
<evidence type="ECO:0000305" key="16"/>
<evidence type="ECO:0000312" key="17">
    <source>
        <dbReference type="MGI" id="MGI:95496"/>
    </source>
</evidence>
<evidence type="ECO:0007744" key="18">
    <source>
    </source>
</evidence>
<evidence type="ECO:0007744" key="19">
    <source>
    </source>
</evidence>
<proteinExistence type="evidence at protein level"/>